<proteinExistence type="evidence at transcript level"/>
<comment type="function">
    <text>Putative taste receptor. TAS1R2/TAS1R3 recognizes diverse natural and synthetic sweeteners.</text>
</comment>
<comment type="subunit">
    <text>Forms heterodimers with TAS1R3.</text>
</comment>
<comment type="subcellular location">
    <subcellularLocation>
        <location>Cell membrane</location>
        <topology>Multi-pass membrane protein</topology>
    </subcellularLocation>
</comment>
<comment type="tissue specificity">
    <text evidence="2">Abundantly expressed in circumvallate and foliate papillae.</text>
</comment>
<comment type="similarity">
    <text evidence="3">Belongs to the G-protein coupled receptor 3 family. TAS1R subfamily.</text>
</comment>
<feature type="signal peptide" evidence="1">
    <location>
        <begin position="1"/>
        <end position="19"/>
    </location>
</feature>
<feature type="chain" id="PRO_0000012959" description="Taste receptor type 1 member 2">
    <location>
        <begin position="20"/>
        <end position="843"/>
    </location>
</feature>
<feature type="topological domain" description="Extracellular" evidence="1">
    <location>
        <begin position="20"/>
        <end position="570"/>
    </location>
</feature>
<feature type="transmembrane region" description="Helical; Name=1" evidence="1">
    <location>
        <begin position="571"/>
        <end position="591"/>
    </location>
</feature>
<feature type="topological domain" description="Cytoplasmic" evidence="1">
    <location>
        <begin position="592"/>
        <end position="606"/>
    </location>
</feature>
<feature type="transmembrane region" description="Helical; Name=2" evidence="1">
    <location>
        <begin position="607"/>
        <end position="627"/>
    </location>
</feature>
<feature type="topological domain" description="Extracellular" evidence="1">
    <location>
        <begin position="628"/>
        <end position="642"/>
    </location>
</feature>
<feature type="transmembrane region" description="Helical; Name=3" evidence="1">
    <location>
        <begin position="643"/>
        <end position="663"/>
    </location>
</feature>
<feature type="topological domain" description="Cytoplasmic" evidence="1">
    <location>
        <begin position="664"/>
        <end position="682"/>
    </location>
</feature>
<feature type="transmembrane region" description="Helical; Name=4" evidence="1">
    <location>
        <begin position="683"/>
        <end position="703"/>
    </location>
</feature>
<feature type="topological domain" description="Extracellular" evidence="1">
    <location>
        <begin position="704"/>
        <end position="731"/>
    </location>
</feature>
<feature type="transmembrane region" description="Helical; Name=5" evidence="1">
    <location>
        <begin position="732"/>
        <end position="752"/>
    </location>
</feature>
<feature type="topological domain" description="Cytoplasmic" evidence="1">
    <location>
        <begin position="753"/>
        <end position="764"/>
    </location>
</feature>
<feature type="transmembrane region" description="Helical; Name=6" evidence="1">
    <location>
        <begin position="765"/>
        <end position="785"/>
    </location>
</feature>
<feature type="topological domain" description="Extracellular" evidence="1">
    <location>
        <begin position="786"/>
        <end position="789"/>
    </location>
</feature>
<feature type="transmembrane region" description="Helical; Name=7" evidence="1">
    <location>
        <begin position="790"/>
        <end position="810"/>
    </location>
</feature>
<feature type="topological domain" description="Cytoplasmic" evidence="1">
    <location>
        <begin position="811"/>
        <end position="843"/>
    </location>
</feature>
<feature type="glycosylation site" description="N-linked (GlcNAc...) asparagine" evidence="1">
    <location>
        <position position="87"/>
    </location>
</feature>
<feature type="glycosylation site" description="N-linked (GlcNAc...) asparagine" evidence="1">
    <location>
        <position position="296"/>
    </location>
</feature>
<feature type="glycosylation site" description="N-linked (GlcNAc...) asparagine" evidence="1">
    <location>
        <position position="316"/>
    </location>
</feature>
<feature type="glycosylation site" description="N-linked (GlcNAc...) asparagine" evidence="1">
    <location>
        <position position="355"/>
    </location>
</feature>
<feature type="glycosylation site" description="N-linked (GlcNAc...) asparagine" evidence="1">
    <location>
        <position position="372"/>
    </location>
</feature>
<feature type="glycosylation site" description="N-linked (GlcNAc...) asparagine" evidence="1">
    <location>
        <position position="432"/>
    </location>
</feature>
<feature type="glycosylation site" description="N-linked (GlcNAc...) asparagine" evidence="1">
    <location>
        <position position="484"/>
    </location>
</feature>
<feature type="glycosylation site" description="N-linked (GlcNAc...) asparagine" evidence="1">
    <location>
        <position position="491"/>
    </location>
</feature>
<feature type="glycosylation site" description="N-linked (GlcNAc...) asparagine" evidence="1">
    <location>
        <position position="531"/>
    </location>
</feature>
<evidence type="ECO:0000255" key="1"/>
<evidence type="ECO:0000269" key="2">
    <source>
    </source>
</evidence>
<evidence type="ECO:0000305" key="3"/>
<keyword id="KW-1003">Cell membrane</keyword>
<keyword id="KW-0297">G-protein coupled receptor</keyword>
<keyword id="KW-0325">Glycoprotein</keyword>
<keyword id="KW-0472">Membrane</keyword>
<keyword id="KW-0675">Receptor</keyword>
<keyword id="KW-1185">Reference proteome</keyword>
<keyword id="KW-0716">Sensory transduction</keyword>
<keyword id="KW-0732">Signal</keyword>
<keyword id="KW-0919">Taste</keyword>
<keyword id="KW-0807">Transducer</keyword>
<keyword id="KW-0812">Transmembrane</keyword>
<keyword id="KW-1133">Transmembrane helix</keyword>
<reference key="1">
    <citation type="journal article" date="1999" name="Cell">
        <title>Putative mammalian taste receptors: a class of taste-specific GPCRs with distinct topographic selectivity.</title>
        <authorList>
            <person name="Hoon M.A."/>
            <person name="Adler E."/>
            <person name="Lindemeier J."/>
            <person name="Battey J.F."/>
            <person name="Ryba N.J.P."/>
            <person name="Zuker C.S."/>
        </authorList>
    </citation>
    <scope>NUCLEOTIDE SEQUENCE [MRNA]</scope>
    <scope>TISSUE SPECIFICITY</scope>
    <source>
        <strain>Wistar</strain>
        <tissue>Circumvallate papilla</tissue>
    </source>
</reference>
<dbReference type="EMBL" id="AF127390">
    <property type="protein sequence ID" value="AAD18070.1"/>
    <property type="molecule type" value="mRNA"/>
</dbReference>
<dbReference type="RefSeq" id="NP_001258195.1">
    <property type="nucleotide sequence ID" value="NM_001271266.2"/>
</dbReference>
<dbReference type="SMR" id="Q9Z0R7"/>
<dbReference type="FunCoup" id="Q9Z0R7">
    <property type="interactions" value="113"/>
</dbReference>
<dbReference type="GlyCosmos" id="Q9Z0R7">
    <property type="glycosylation" value="9 sites, No reported glycans"/>
</dbReference>
<dbReference type="GlyGen" id="Q9Z0R7">
    <property type="glycosylation" value="9 sites"/>
</dbReference>
<dbReference type="PhosphoSitePlus" id="Q9Z0R7"/>
<dbReference type="SwissPalm" id="Q9Z0R7"/>
<dbReference type="Ensembl" id="ENSRNOT00000077863.2">
    <property type="protein sequence ID" value="ENSRNOP00000072481.1"/>
    <property type="gene ID" value="ENSRNOG00000061876.2"/>
</dbReference>
<dbReference type="GeneID" id="100270683"/>
<dbReference type="KEGG" id="rno:100270683"/>
<dbReference type="AGR" id="RGD:61894"/>
<dbReference type="CTD" id="80834"/>
<dbReference type="RGD" id="61894">
    <property type="gene designation" value="Tas1r2"/>
</dbReference>
<dbReference type="GeneTree" id="ENSGT00940000156136"/>
<dbReference type="HOGENOM" id="CLU_005389_5_1_1"/>
<dbReference type="InParanoid" id="Q9Z0R7"/>
<dbReference type="OMA" id="STCLCRQ"/>
<dbReference type="OrthoDB" id="5984008at2759"/>
<dbReference type="PhylomeDB" id="Q9Z0R7"/>
<dbReference type="Reactome" id="R-RNO-418594">
    <property type="pathway name" value="G alpha (i) signalling events"/>
</dbReference>
<dbReference type="Reactome" id="R-RNO-420499">
    <property type="pathway name" value="Class C/3 (Metabotropic glutamate/pheromone receptors)"/>
</dbReference>
<dbReference type="Reactome" id="R-RNO-9717207">
    <property type="pathway name" value="Sensory perception of sweet, bitter, and umami (glutamate) taste"/>
</dbReference>
<dbReference type="PRO" id="PR:Q9Z0R7"/>
<dbReference type="Proteomes" id="UP000002494">
    <property type="component" value="Chromosome 5"/>
</dbReference>
<dbReference type="Bgee" id="ENSRNOG00000061876">
    <property type="expression patterns" value="Expressed in liver and 19 other cell types or tissues"/>
</dbReference>
<dbReference type="ExpressionAtlas" id="Q9Z0R7">
    <property type="expression patterns" value="baseline and differential"/>
</dbReference>
<dbReference type="GO" id="GO:0016020">
    <property type="term" value="C:membrane"/>
    <property type="evidence" value="ECO:0000305"/>
    <property type="project" value="UniProtKB"/>
</dbReference>
<dbReference type="GO" id="GO:0005886">
    <property type="term" value="C:plasma membrane"/>
    <property type="evidence" value="ECO:0000318"/>
    <property type="project" value="GO_Central"/>
</dbReference>
<dbReference type="GO" id="GO:0043235">
    <property type="term" value="C:receptor complex"/>
    <property type="evidence" value="ECO:0000266"/>
    <property type="project" value="RGD"/>
</dbReference>
<dbReference type="GO" id="GO:1903767">
    <property type="term" value="C:sweet taste receptor complex"/>
    <property type="evidence" value="ECO:0000266"/>
    <property type="project" value="RGD"/>
</dbReference>
<dbReference type="GO" id="GO:0004930">
    <property type="term" value="F:G protein-coupled receptor activity"/>
    <property type="evidence" value="ECO:0000318"/>
    <property type="project" value="GO_Central"/>
</dbReference>
<dbReference type="GO" id="GO:0033041">
    <property type="term" value="F:sweet taste receptor activity"/>
    <property type="evidence" value="ECO:0000266"/>
    <property type="project" value="RGD"/>
</dbReference>
<dbReference type="GO" id="GO:0008527">
    <property type="term" value="F:taste receptor activity"/>
    <property type="evidence" value="ECO:0000353"/>
    <property type="project" value="UniProtKB"/>
</dbReference>
<dbReference type="GO" id="GO:0001582">
    <property type="term" value="P:detection of chemical stimulus involved in sensory perception of sweet taste"/>
    <property type="evidence" value="ECO:0000266"/>
    <property type="project" value="RGD"/>
</dbReference>
<dbReference type="GO" id="GO:0032467">
    <property type="term" value="P:positive regulation of cytokinesis"/>
    <property type="evidence" value="ECO:0000266"/>
    <property type="project" value="RGD"/>
</dbReference>
<dbReference type="GO" id="GO:0050916">
    <property type="term" value="P:sensory perception of sweet taste"/>
    <property type="evidence" value="ECO:0000314"/>
    <property type="project" value="UniProtKB"/>
</dbReference>
<dbReference type="FunFam" id="3.40.50.2300:FF:000016">
    <property type="entry name" value="Taste 1 receptor member 2"/>
    <property type="match status" value="1"/>
</dbReference>
<dbReference type="FunFam" id="2.10.50.30:FF:000004">
    <property type="entry name" value="Taste receptor type 1 member 3-like protein"/>
    <property type="match status" value="1"/>
</dbReference>
<dbReference type="Gene3D" id="3.40.50.2300">
    <property type="match status" value="2"/>
</dbReference>
<dbReference type="Gene3D" id="2.10.50.30">
    <property type="entry name" value="GPCR, family 3, nine cysteines domain"/>
    <property type="match status" value="1"/>
</dbReference>
<dbReference type="InterPro" id="IPR001828">
    <property type="entry name" value="ANF_lig-bd_rcpt"/>
</dbReference>
<dbReference type="InterPro" id="IPR000337">
    <property type="entry name" value="GPCR_3"/>
</dbReference>
<dbReference type="InterPro" id="IPR011500">
    <property type="entry name" value="GPCR_3_9-Cys_dom"/>
</dbReference>
<dbReference type="InterPro" id="IPR038550">
    <property type="entry name" value="GPCR_3_9-Cys_sf"/>
</dbReference>
<dbReference type="InterPro" id="IPR017978">
    <property type="entry name" value="GPCR_3_C"/>
</dbReference>
<dbReference type="InterPro" id="IPR000068">
    <property type="entry name" value="GPCR_3_Ca_sens_rcpt-rel"/>
</dbReference>
<dbReference type="InterPro" id="IPR017979">
    <property type="entry name" value="GPCR_3_CS"/>
</dbReference>
<dbReference type="InterPro" id="IPR028082">
    <property type="entry name" value="Peripla_BP_I"/>
</dbReference>
<dbReference type="PANTHER" id="PTHR24061">
    <property type="entry name" value="CALCIUM-SENSING RECEPTOR-RELATED"/>
    <property type="match status" value="1"/>
</dbReference>
<dbReference type="PANTHER" id="PTHR24061:SF517">
    <property type="entry name" value="TASTE RECEPTOR TYPE 1 MEMBER 2"/>
    <property type="match status" value="1"/>
</dbReference>
<dbReference type="Pfam" id="PF00003">
    <property type="entry name" value="7tm_3"/>
    <property type="match status" value="1"/>
</dbReference>
<dbReference type="Pfam" id="PF01094">
    <property type="entry name" value="ANF_receptor"/>
    <property type="match status" value="1"/>
</dbReference>
<dbReference type="Pfam" id="PF07562">
    <property type="entry name" value="NCD3G"/>
    <property type="match status" value="1"/>
</dbReference>
<dbReference type="PRINTS" id="PR00248">
    <property type="entry name" value="GPCRMGR"/>
</dbReference>
<dbReference type="SUPFAM" id="SSF53822">
    <property type="entry name" value="Periplasmic binding protein-like I"/>
    <property type="match status" value="1"/>
</dbReference>
<dbReference type="SUPFAM" id="SSF57586">
    <property type="entry name" value="TNF receptor-like"/>
    <property type="match status" value="1"/>
</dbReference>
<dbReference type="PROSITE" id="PS00980">
    <property type="entry name" value="G_PROTEIN_RECEP_F3_2"/>
    <property type="match status" value="1"/>
</dbReference>
<dbReference type="PROSITE" id="PS50259">
    <property type="entry name" value="G_PROTEIN_RECEP_F3_4"/>
    <property type="match status" value="1"/>
</dbReference>
<sequence length="843" mass="95800">MGPQARTLCLLSLLLHVLPKPGKLVENSDFHLAGDYLLGGLFTLHANVKSISHLSYLQVPKCNEFTMKVLGYNLMQAMRFAVEEINNCSSLLPGVLLGYEMVDVCYLSNNIHPGLYFLAQDDDLLPILKDYSQYMPHVVAVIGPDNSESAITVSNILSHFLIPQITYSAISDKLRDKRHFPSMLRTVPSATHHIEAMVQLMVHFQWNWIVVLVSDDDYGRENSHLLSQRLTKTSDICIAFQEVLPIPESSQVMRSEEQRQLDNILDKLRRTSARVVVVFSPELSLYSFFHEVLRWNFTGFVWIASESWAIDPVLHNLTELRHTGTFLGVTIQRVSIPGFSQFRVRRDKPGYPVPNTTNLRTTCNQDCDACLNTTKSFNNILILSGERVVYSVYSAVYAVAHALHRLLGCNRVRCTKQKVYPWQLLREIWHVNFTLLGNRLFFDQQGDMPMLLDIIQWQWDLSQNPFQSIASYSPTSKRLTYINNVSWYTPNNTVPVSMCSKSCQPGQMKKSVGLHPCCFECLDCMPGTYLNRSADEFNCLSCPGSMWSYKNDITCFQRRPTFLEWHEVPTIVVAILAALGFFSTLAILFIFWRHFQTPMVRSAGGPMCFLMLVPLLLAFGMVPVYVGPPTVFSCFCRQAFFTVCFSICLSCITVRSFQIVCVFKMARRLPSAYSFWMRYHGPYVFVAFITAIKVALVVGNMLATTINPIGRTDPDDPNIMILSCHPNYRNGLLFNTSMDLLLSVLGFSFAYMGKELPTNYNEAKFITLSMTFSFTSSISLCTFMSVHDGVLVTIMDLLVTVLNFLAIGLGYFGPKCYMILFYPERNTSAYFNSMIQGYTMRKS</sequence>
<organism>
    <name type="scientific">Rattus norvegicus</name>
    <name type="common">Rat</name>
    <dbReference type="NCBI Taxonomy" id="10116"/>
    <lineage>
        <taxon>Eukaryota</taxon>
        <taxon>Metazoa</taxon>
        <taxon>Chordata</taxon>
        <taxon>Craniata</taxon>
        <taxon>Vertebrata</taxon>
        <taxon>Euteleostomi</taxon>
        <taxon>Mammalia</taxon>
        <taxon>Eutheria</taxon>
        <taxon>Euarchontoglires</taxon>
        <taxon>Glires</taxon>
        <taxon>Rodentia</taxon>
        <taxon>Myomorpha</taxon>
        <taxon>Muroidea</taxon>
        <taxon>Muridae</taxon>
        <taxon>Murinae</taxon>
        <taxon>Rattus</taxon>
    </lineage>
</organism>
<name>TS1R2_RAT</name>
<gene>
    <name type="primary">Tas1r2</name>
    <name type="synonym">Gpr71</name>
    <name type="synonym">T1r2</name>
    <name type="synonym">Tr2</name>
</gene>
<accession>Q9Z0R7</accession>
<protein>
    <recommendedName>
        <fullName>Taste receptor type 1 member 2</fullName>
    </recommendedName>
    <alternativeName>
        <fullName>G-protein coupled receptor 71</fullName>
    </alternativeName>
    <alternativeName>
        <fullName>Sweet taste receptor T1R2</fullName>
    </alternativeName>
</protein>